<gene>
    <name type="primary">Cbp20</name>
    <name type="ORF">GG22670</name>
</gene>
<accession>B3P0D7</accession>
<sequence>MSASVELSSYRDQHFKGSRSEQERSLRGSCTLYVGNLSFYTTEEQIHELFSRCGDVRVIVMGLDKYKKTPCGFCFVEYYVRAEAEAAMRFVNGTRLDDRLIRVDWDAGFIEGRQYGRGKTGGQVRDEYRTDYDAGRGGYGKLLSQKIAPNTDNR</sequence>
<keyword id="KW-0507">mRNA processing</keyword>
<keyword id="KW-0508">mRNA splicing</keyword>
<keyword id="KW-0539">Nucleus</keyword>
<keyword id="KW-0694">RNA-binding</keyword>
<keyword id="KW-0943">RNA-mediated gene silencing</keyword>
<feature type="chain" id="PRO_0000385264" description="Nuclear cap-binding protein subunit 2">
    <location>
        <begin position="1"/>
        <end position="154"/>
    </location>
</feature>
<feature type="domain" description="RRM" evidence="2">
    <location>
        <begin position="30"/>
        <end position="108"/>
    </location>
</feature>
<feature type="binding site" evidence="1">
    <location>
        <position position="10"/>
    </location>
    <ligand>
        <name>mRNA</name>
        <dbReference type="ChEBI" id="CHEBI:33699"/>
    </ligand>
    <ligandPart>
        <name>mRNA cap</name>
    </ligandPart>
</feature>
<feature type="binding site" evidence="1">
    <location>
        <position position="33"/>
    </location>
    <ligand>
        <name>mRNA</name>
        <dbReference type="ChEBI" id="CHEBI:33699"/>
    </ligand>
    <ligandPart>
        <name>mRNA cap</name>
    </ligandPart>
</feature>
<feature type="binding site" evidence="1">
    <location>
        <begin position="102"/>
        <end position="106"/>
    </location>
    <ligand>
        <name>mRNA</name>
        <dbReference type="ChEBI" id="CHEBI:33699"/>
    </ligand>
    <ligandPart>
        <name>mRNA cap</name>
    </ligandPart>
</feature>
<feature type="binding site" evidence="1">
    <location>
        <begin position="113"/>
        <end position="117"/>
    </location>
    <ligand>
        <name>mRNA</name>
        <dbReference type="ChEBI" id="CHEBI:33699"/>
    </ligand>
    <ligandPart>
        <name>mRNA cap</name>
    </ligandPart>
</feature>
<feature type="binding site" evidence="1">
    <location>
        <begin position="123"/>
        <end position="124"/>
    </location>
    <ligand>
        <name>mRNA</name>
        <dbReference type="ChEBI" id="CHEBI:33699"/>
    </ligand>
    <ligandPart>
        <name>mRNA cap</name>
    </ligandPart>
</feature>
<comment type="function">
    <text evidence="1">Component of the cap-binding complex (CBC), which binds co-transcriptionally to the 5' cap of pre-mRNAs and is involved in various processes such as pre-mRNA splicing and RNA-mediated gene silencing (RNAi). The CBC complex is involved in miRNA-mediated RNA interference via its interaction with Ars2 and is required for primary microRNAs (miRNAs) processing. Also involved in innate immunity via the short interfering RNAs (siRNAs) processing machinery by restricting the viral RNA production. In the CBC complex, Cbp20 recognizes and binds capped RNAs (m7GpppG-capped RNA) but requires Cbp80 to stabilize the movement of its N-terminal loop and lock the CBC into a high affinity cap-binding state with the cap structure (By similarity).</text>
</comment>
<comment type="subunit">
    <text evidence="1">Component of the nuclear cap-binding complex (CBC), a heterodimer composed of Cbp80 and Cbp20 that interacts with m7GpppG-capped RNA. Interacts with Ars2 (By similarity).</text>
</comment>
<comment type="subcellular location">
    <subcellularLocation>
        <location evidence="1">Nucleus</location>
    </subcellularLocation>
</comment>
<comment type="similarity">
    <text evidence="3">Belongs to the RRM NCBP2 family.</text>
</comment>
<evidence type="ECO:0000250" key="1"/>
<evidence type="ECO:0000255" key="2">
    <source>
        <dbReference type="PROSITE-ProRule" id="PRU00176"/>
    </source>
</evidence>
<evidence type="ECO:0000305" key="3"/>
<protein>
    <recommendedName>
        <fullName>Nuclear cap-binding protein subunit 2</fullName>
    </recommendedName>
    <alternativeName>
        <fullName>20 kDa nuclear cap-binding protein</fullName>
    </alternativeName>
    <alternativeName>
        <fullName>NCBP 20 kDa subunit</fullName>
        <shortName>CBP20</shortName>
    </alternativeName>
</protein>
<organism>
    <name type="scientific">Drosophila erecta</name>
    <name type="common">Fruit fly</name>
    <dbReference type="NCBI Taxonomy" id="7220"/>
    <lineage>
        <taxon>Eukaryota</taxon>
        <taxon>Metazoa</taxon>
        <taxon>Ecdysozoa</taxon>
        <taxon>Arthropoda</taxon>
        <taxon>Hexapoda</taxon>
        <taxon>Insecta</taxon>
        <taxon>Pterygota</taxon>
        <taxon>Neoptera</taxon>
        <taxon>Endopterygota</taxon>
        <taxon>Diptera</taxon>
        <taxon>Brachycera</taxon>
        <taxon>Muscomorpha</taxon>
        <taxon>Ephydroidea</taxon>
        <taxon>Drosophilidae</taxon>
        <taxon>Drosophila</taxon>
        <taxon>Sophophora</taxon>
    </lineage>
</organism>
<reference key="1">
    <citation type="journal article" date="2007" name="Nature">
        <title>Evolution of genes and genomes on the Drosophila phylogeny.</title>
        <authorList>
            <consortium name="Drosophila 12 genomes consortium"/>
        </authorList>
    </citation>
    <scope>NUCLEOTIDE SEQUENCE [LARGE SCALE GENOMIC DNA]</scope>
    <source>
        <strain>Tucson 14021-0224.01</strain>
    </source>
</reference>
<proteinExistence type="inferred from homology"/>
<dbReference type="EMBL" id="CH954181">
    <property type="protein sequence ID" value="EDV48652.1"/>
    <property type="molecule type" value="Genomic_DNA"/>
</dbReference>
<dbReference type="SMR" id="B3P0D7"/>
<dbReference type="EnsemblMetazoa" id="FBtr0142724">
    <property type="protein sequence ID" value="FBpp0141216"/>
    <property type="gene ID" value="FBgn0114835"/>
</dbReference>
<dbReference type="EnsemblMetazoa" id="XM_001979658.3">
    <property type="protein sequence ID" value="XP_001979694.1"/>
    <property type="gene ID" value="LOC6551744"/>
</dbReference>
<dbReference type="GeneID" id="6551744"/>
<dbReference type="KEGG" id="der:6551744"/>
<dbReference type="CTD" id="42166"/>
<dbReference type="eggNOG" id="KOG0121">
    <property type="taxonomic scope" value="Eukaryota"/>
</dbReference>
<dbReference type="HOGENOM" id="CLU_070952_2_0_1"/>
<dbReference type="OMA" id="DIRRIIM"/>
<dbReference type="OrthoDB" id="201398at2759"/>
<dbReference type="PhylomeDB" id="B3P0D7"/>
<dbReference type="Proteomes" id="UP000008711">
    <property type="component" value="Unassembled WGS sequence"/>
</dbReference>
<dbReference type="GO" id="GO:0005846">
    <property type="term" value="C:nuclear cap binding complex"/>
    <property type="evidence" value="ECO:0007669"/>
    <property type="project" value="InterPro"/>
</dbReference>
<dbReference type="GO" id="GO:0005634">
    <property type="term" value="C:nucleus"/>
    <property type="evidence" value="ECO:0007669"/>
    <property type="project" value="UniProtKB-SubCell"/>
</dbReference>
<dbReference type="GO" id="GO:0099523">
    <property type="term" value="C:presynaptic cytosol"/>
    <property type="evidence" value="ECO:0007669"/>
    <property type="project" value="EnsemblMetazoa"/>
</dbReference>
<dbReference type="GO" id="GO:0000339">
    <property type="term" value="F:RNA cap binding"/>
    <property type="evidence" value="ECO:0007669"/>
    <property type="project" value="InterPro"/>
</dbReference>
<dbReference type="GO" id="GO:0045292">
    <property type="term" value="P:mRNA cis splicing, via spliceosome"/>
    <property type="evidence" value="ECO:0007669"/>
    <property type="project" value="InterPro"/>
</dbReference>
<dbReference type="GO" id="GO:0045071">
    <property type="term" value="P:negative regulation of viral genome replication"/>
    <property type="evidence" value="ECO:0007669"/>
    <property type="project" value="EnsemblMetazoa"/>
</dbReference>
<dbReference type="GO" id="GO:0031053">
    <property type="term" value="P:primary miRNA processing"/>
    <property type="evidence" value="ECO:0007669"/>
    <property type="project" value="EnsemblMetazoa"/>
</dbReference>
<dbReference type="GO" id="GO:0035194">
    <property type="term" value="P:regulatory ncRNA-mediated post-transcriptional gene silencing"/>
    <property type="evidence" value="ECO:0007669"/>
    <property type="project" value="EnsemblMetazoa"/>
</dbReference>
<dbReference type="GO" id="GO:0030422">
    <property type="term" value="P:siRNA processing"/>
    <property type="evidence" value="ECO:0007669"/>
    <property type="project" value="EnsemblMetazoa"/>
</dbReference>
<dbReference type="CDD" id="cd12240">
    <property type="entry name" value="RRM_NCBP2"/>
    <property type="match status" value="1"/>
</dbReference>
<dbReference type="FunFam" id="3.30.70.330:FF:000128">
    <property type="entry name" value="Nuclear cap-binding protein subunit 2"/>
    <property type="match status" value="1"/>
</dbReference>
<dbReference type="Gene3D" id="3.30.70.330">
    <property type="match status" value="1"/>
</dbReference>
<dbReference type="InterPro" id="IPR027157">
    <property type="entry name" value="NCBP2"/>
</dbReference>
<dbReference type="InterPro" id="IPR034148">
    <property type="entry name" value="NCBP2_RRM"/>
</dbReference>
<dbReference type="InterPro" id="IPR012677">
    <property type="entry name" value="Nucleotide-bd_a/b_plait_sf"/>
</dbReference>
<dbReference type="InterPro" id="IPR035979">
    <property type="entry name" value="RBD_domain_sf"/>
</dbReference>
<dbReference type="InterPro" id="IPR000504">
    <property type="entry name" value="RRM_dom"/>
</dbReference>
<dbReference type="PANTHER" id="PTHR18847">
    <property type="entry name" value="20 KD NUCLEAR CAP BINDING PROTEIN"/>
    <property type="match status" value="1"/>
</dbReference>
<dbReference type="PANTHER" id="PTHR18847:SF0">
    <property type="entry name" value="NUCLEAR CAP-BINDING PROTEIN SUBUNIT 2"/>
    <property type="match status" value="1"/>
</dbReference>
<dbReference type="Pfam" id="PF00076">
    <property type="entry name" value="RRM_1"/>
    <property type="match status" value="1"/>
</dbReference>
<dbReference type="SMART" id="SM00360">
    <property type="entry name" value="RRM"/>
    <property type="match status" value="1"/>
</dbReference>
<dbReference type="SUPFAM" id="SSF54928">
    <property type="entry name" value="RNA-binding domain, RBD"/>
    <property type="match status" value="1"/>
</dbReference>
<dbReference type="PROSITE" id="PS50102">
    <property type="entry name" value="RRM"/>
    <property type="match status" value="1"/>
</dbReference>
<name>NCBP2_DROER</name>